<evidence type="ECO:0000250" key="1">
    <source>
        <dbReference type="UniProtKB" id="P15646"/>
    </source>
</evidence>
<evidence type="ECO:0000250" key="2">
    <source>
        <dbReference type="UniProtKB" id="P22087"/>
    </source>
</evidence>
<evidence type="ECO:0000250" key="3">
    <source>
        <dbReference type="UniProtKB" id="P22509"/>
    </source>
</evidence>
<evidence type="ECO:0000250" key="4">
    <source>
        <dbReference type="UniProtKB" id="P35550"/>
    </source>
</evidence>
<evidence type="ECO:0000250" key="5">
    <source>
        <dbReference type="UniProtKB" id="Q9Y9U3"/>
    </source>
</evidence>
<evidence type="ECO:0000255" key="6"/>
<evidence type="ECO:0000256" key="7">
    <source>
        <dbReference type="SAM" id="MobiDB-lite"/>
    </source>
</evidence>
<evidence type="ECO:0000305" key="8"/>
<keyword id="KW-0488">Methylation</keyword>
<keyword id="KW-0489">Methyltransferase</keyword>
<keyword id="KW-0539">Nucleus</keyword>
<keyword id="KW-1185">Reference proteome</keyword>
<keyword id="KW-0687">Ribonucleoprotein</keyword>
<keyword id="KW-0694">RNA-binding</keyword>
<keyword id="KW-0698">rRNA processing</keyword>
<keyword id="KW-0949">S-adenosyl-L-methionine</keyword>
<keyword id="KW-0808">Transferase</keyword>
<sequence length="323" mass="34332">MRPGFSPRGGRGGFGDRGGFGGRGGFGDRGGFRGGSRGGFGGRGRGGDRGGRGGFRGGFSSPGRGGPRGGGRGGFGGGRGGFGAGRKVIVEPHRHEGIFICRGKEDALVTKNLVPGESVYGEKRISVEDGEVKTEYRAWNPFRSKIAAAILGGVDQIHIKPGVKVLYLGAASGTTVSHVSDVVGPEGLVYAVEFSHRSGRDLINVAKKRTNIIPVIEDARHPHKYRILVGMVDVVFADVAQPDQTRIVALNAHNFLKNGGHFVISIKANCIDSTAAPEAVFAAEVKKMQQENMKPQEQLTLEPYERDHAVVVGIYRPPPKQKK</sequence>
<accession>P22232</accession>
<name>FBRL_XENLA</name>
<dbReference type="EC" id="2.1.1.-" evidence="2"/>
<dbReference type="EMBL" id="M28874">
    <property type="protein sequence ID" value="AAA49710.1"/>
    <property type="molecule type" value="mRNA"/>
</dbReference>
<dbReference type="PIR" id="I51417">
    <property type="entry name" value="I51417"/>
</dbReference>
<dbReference type="SMR" id="P22232"/>
<dbReference type="AGR" id="Xenbase:XB-GENE-6256327"/>
<dbReference type="Xenbase" id="XB-GENE-6256327">
    <property type="gene designation" value="fbl.S"/>
</dbReference>
<dbReference type="CD-CODE" id="78E86D56">
    <property type="entry name" value="Mitochondrial cloud"/>
</dbReference>
<dbReference type="CD-CODE" id="AC502520">
    <property type="entry name" value="Nucleolus"/>
</dbReference>
<dbReference type="Proteomes" id="UP000186698">
    <property type="component" value="Unplaced"/>
</dbReference>
<dbReference type="GO" id="GO:0031428">
    <property type="term" value="C:box C/D methylation guide snoRNP complex"/>
    <property type="evidence" value="ECO:0000318"/>
    <property type="project" value="GO_Central"/>
</dbReference>
<dbReference type="GO" id="GO:0015030">
    <property type="term" value="C:Cajal body"/>
    <property type="evidence" value="ECO:0000318"/>
    <property type="project" value="GO_Central"/>
</dbReference>
<dbReference type="GO" id="GO:0005730">
    <property type="term" value="C:nucleolus"/>
    <property type="evidence" value="ECO:0000250"/>
    <property type="project" value="UniProtKB"/>
</dbReference>
<dbReference type="GO" id="GO:0005634">
    <property type="term" value="C:nucleus"/>
    <property type="evidence" value="ECO:0000250"/>
    <property type="project" value="UniProtKB"/>
</dbReference>
<dbReference type="GO" id="GO:0032040">
    <property type="term" value="C:small-subunit processome"/>
    <property type="evidence" value="ECO:0000250"/>
    <property type="project" value="UniProtKB"/>
</dbReference>
<dbReference type="GO" id="GO:1990259">
    <property type="term" value="F:histone H2AQ104 methyltransferase activity"/>
    <property type="evidence" value="ECO:0000250"/>
    <property type="project" value="UniProtKB"/>
</dbReference>
<dbReference type="GO" id="GO:0003723">
    <property type="term" value="F:RNA binding"/>
    <property type="evidence" value="ECO:0000318"/>
    <property type="project" value="GO_Central"/>
</dbReference>
<dbReference type="GO" id="GO:0008649">
    <property type="term" value="F:rRNA methyltransferase activity"/>
    <property type="evidence" value="ECO:0000318"/>
    <property type="project" value="GO_Central"/>
</dbReference>
<dbReference type="GO" id="GO:0180021">
    <property type="term" value="F:U6 snRNA 2'-O-ribose methyltransferase activity"/>
    <property type="evidence" value="ECO:0007669"/>
    <property type="project" value="RHEA"/>
</dbReference>
<dbReference type="GO" id="GO:0000494">
    <property type="term" value="P:box C/D sno(s)RNA 3'-end processing"/>
    <property type="evidence" value="ECO:0000318"/>
    <property type="project" value="GO_Central"/>
</dbReference>
<dbReference type="GO" id="GO:0042274">
    <property type="term" value="P:ribosomal small subunit biogenesis"/>
    <property type="evidence" value="ECO:0000250"/>
    <property type="project" value="UniProtKB"/>
</dbReference>
<dbReference type="GO" id="GO:0031167">
    <property type="term" value="P:rRNA methylation"/>
    <property type="evidence" value="ECO:0000250"/>
    <property type="project" value="UniProtKB"/>
</dbReference>
<dbReference type="FunFam" id="3.30.200.20:FF:000056">
    <property type="entry name" value="Fibrillarin like 1"/>
    <property type="match status" value="1"/>
</dbReference>
<dbReference type="FunFam" id="3.40.50.150:FF:000001">
    <property type="entry name" value="Fibrillarin like 1"/>
    <property type="match status" value="1"/>
</dbReference>
<dbReference type="Gene3D" id="3.30.200.20">
    <property type="entry name" value="Phosphorylase Kinase, domain 1"/>
    <property type="match status" value="1"/>
</dbReference>
<dbReference type="Gene3D" id="3.40.50.150">
    <property type="entry name" value="Vaccinia Virus protein VP39"/>
    <property type="match status" value="1"/>
</dbReference>
<dbReference type="HAMAP" id="MF_00351">
    <property type="entry name" value="RNA_methyltransf_FlpA"/>
    <property type="match status" value="1"/>
</dbReference>
<dbReference type="InterPro" id="IPR000692">
    <property type="entry name" value="Fibrillarin"/>
</dbReference>
<dbReference type="InterPro" id="IPR020813">
    <property type="entry name" value="Fibrillarin_CS"/>
</dbReference>
<dbReference type="InterPro" id="IPR029063">
    <property type="entry name" value="SAM-dependent_MTases_sf"/>
</dbReference>
<dbReference type="NCBIfam" id="NF003276">
    <property type="entry name" value="PRK04266.1-2"/>
    <property type="match status" value="1"/>
</dbReference>
<dbReference type="PANTHER" id="PTHR10335:SF17">
    <property type="entry name" value="FIBRILLARIN"/>
    <property type="match status" value="1"/>
</dbReference>
<dbReference type="PANTHER" id="PTHR10335">
    <property type="entry name" value="RRNA 2-O-METHYLTRANSFERASE FIBRILLARIN"/>
    <property type="match status" value="1"/>
</dbReference>
<dbReference type="Pfam" id="PF01269">
    <property type="entry name" value="Fibrillarin"/>
    <property type="match status" value="1"/>
</dbReference>
<dbReference type="PRINTS" id="PR00052">
    <property type="entry name" value="FIBRILLARIN"/>
</dbReference>
<dbReference type="SMART" id="SM01206">
    <property type="entry name" value="Fibrillarin"/>
    <property type="match status" value="1"/>
</dbReference>
<dbReference type="SUPFAM" id="SSF53335">
    <property type="entry name" value="S-adenosyl-L-methionine-dependent methyltransferases"/>
    <property type="match status" value="1"/>
</dbReference>
<dbReference type="PROSITE" id="PS00566">
    <property type="entry name" value="FIBRILLARIN"/>
    <property type="match status" value="1"/>
</dbReference>
<feature type="chain" id="PRO_0000148510" description="rRNA 2'-O-methyltransferase fibrillarin">
    <location>
        <begin position="1"/>
        <end position="323"/>
    </location>
</feature>
<feature type="region of interest" description="Disordered" evidence="7">
    <location>
        <begin position="1"/>
        <end position="78"/>
    </location>
</feature>
<feature type="region of interest" description="Helical" evidence="6">
    <location>
        <begin position="276"/>
        <end position="308"/>
    </location>
</feature>
<feature type="compositionally biased region" description="Gly residues" evidence="7">
    <location>
        <begin position="7"/>
        <end position="44"/>
    </location>
</feature>
<feature type="compositionally biased region" description="Gly residues" evidence="7">
    <location>
        <begin position="63"/>
        <end position="78"/>
    </location>
</feature>
<feature type="binding site" evidence="5">
    <location>
        <begin position="174"/>
        <end position="175"/>
    </location>
    <ligand>
        <name>S-adenosyl-L-methionine</name>
        <dbReference type="ChEBI" id="CHEBI:59789"/>
    </ligand>
</feature>
<feature type="binding site" evidence="2">
    <location>
        <begin position="193"/>
        <end position="194"/>
    </location>
    <ligand>
        <name>S-adenosyl-L-methionine</name>
        <dbReference type="ChEBI" id="CHEBI:59789"/>
    </ligand>
</feature>
<feature type="binding site" evidence="2">
    <location>
        <begin position="218"/>
        <end position="219"/>
    </location>
    <ligand>
        <name>S-adenosyl-L-methionine</name>
        <dbReference type="ChEBI" id="CHEBI:59789"/>
    </ligand>
</feature>
<feature type="binding site" evidence="2">
    <location>
        <begin position="238"/>
        <end position="241"/>
    </location>
    <ligand>
        <name>S-adenosyl-L-methionine</name>
        <dbReference type="ChEBI" id="CHEBI:59789"/>
    </ligand>
</feature>
<feature type="modified residue" description="Asymmetric dimethylarginine" evidence="3">
    <location>
        <position position="8"/>
    </location>
</feature>
<feature type="modified residue" description="Asymmetric dimethylarginine" evidence="3">
    <location>
        <position position="17"/>
    </location>
</feature>
<feature type="modified residue" description="Asymmetric dimethylarginine" evidence="3">
    <location>
        <position position="23"/>
    </location>
</feature>
<feature type="modified residue" description="Asymmetric dimethylarginine" evidence="3">
    <location>
        <position position="29"/>
    </location>
</feature>
<organism>
    <name type="scientific">Xenopus laevis</name>
    <name type="common">African clawed frog</name>
    <dbReference type="NCBI Taxonomy" id="8355"/>
    <lineage>
        <taxon>Eukaryota</taxon>
        <taxon>Metazoa</taxon>
        <taxon>Chordata</taxon>
        <taxon>Craniata</taxon>
        <taxon>Vertebrata</taxon>
        <taxon>Euteleostomi</taxon>
        <taxon>Amphibia</taxon>
        <taxon>Batrachia</taxon>
        <taxon>Anura</taxon>
        <taxon>Pipoidea</taxon>
        <taxon>Pipidae</taxon>
        <taxon>Xenopodinae</taxon>
        <taxon>Xenopus</taxon>
        <taxon>Xenopus</taxon>
    </lineage>
</organism>
<comment type="function">
    <text evidence="1 2">S-adenosyl-L-methionine-dependent methyltransferase that has the ability to methylate both RNAs and proteins. Involved in pre-rRNA processing by catalyzing the site-specific 2'-hydroxyl methylation of ribose moieties in pre-ribosomal RNA. Probably catalyzes 2'-O-methylation of U6 snRNAs in box C/D RNP complexes. U6 snRNA 2'-O-methylation is required for mRNA splicing fidelity. Also acts as a protein methyltransferase by mediating methylation of 'Gln-105' of histone H2A (H2AQ104me), a modification that impairs binding of the FACT complex and is specifically present at 35S ribosomal DNA locus. Part of the small subunit (SSU) processome, first precursor of the small eukaryotic ribosomal subunit. During the assembly of the SSU processome in the nucleolus, many ribosome biogenesis factors, an RNA chaperone and ribosomal proteins associate with the nascent pre-rRNA and work in concert to generate RNA folding, modifications, rearrangements and cleavage as well as targeted degradation of pre-ribosomal RNA by the RNA exosome (By similarity).</text>
</comment>
<comment type="catalytic activity">
    <reaction evidence="2">
        <text>L-glutaminyl-[histone H2A] + S-adenosyl-L-methionine = N(5)-methyl-L-glutaminyl-[histone H2A] + S-adenosyl-L-homocysteine + H(+)</text>
        <dbReference type="Rhea" id="RHEA:50904"/>
        <dbReference type="Rhea" id="RHEA-COMP:12837"/>
        <dbReference type="Rhea" id="RHEA-COMP:12839"/>
        <dbReference type="ChEBI" id="CHEBI:15378"/>
        <dbReference type="ChEBI" id="CHEBI:30011"/>
        <dbReference type="ChEBI" id="CHEBI:57856"/>
        <dbReference type="ChEBI" id="CHEBI:59789"/>
        <dbReference type="ChEBI" id="CHEBI:61891"/>
    </reaction>
</comment>
<comment type="catalytic activity">
    <reaction evidence="1">
        <text>a ribonucleotide in rRNA + S-adenosyl-L-methionine = a 2'-O-methylribonucleotide in rRNA + S-adenosyl-L-homocysteine + H(+)</text>
        <dbReference type="Rhea" id="RHEA:48628"/>
        <dbReference type="Rhea" id="RHEA-COMP:12164"/>
        <dbReference type="Rhea" id="RHEA-COMP:12165"/>
        <dbReference type="ChEBI" id="CHEBI:15378"/>
        <dbReference type="ChEBI" id="CHEBI:57856"/>
        <dbReference type="ChEBI" id="CHEBI:59789"/>
        <dbReference type="ChEBI" id="CHEBI:90675"/>
        <dbReference type="ChEBI" id="CHEBI:90676"/>
    </reaction>
    <physiologicalReaction direction="left-to-right" evidence="1">
        <dbReference type="Rhea" id="RHEA:48629"/>
    </physiologicalReaction>
</comment>
<comment type="catalytic activity">
    <reaction evidence="2">
        <text>a ribonucleotide in U6 snRNA + S-adenosyl-L-methionine = a 2'-O-methylribonucleotide in U6 snRNA + S-adenosyl-L-homocysteine + H(+)</text>
        <dbReference type="Rhea" id="RHEA:63088"/>
        <dbReference type="Rhea" id="RHEA-COMP:16262"/>
        <dbReference type="Rhea" id="RHEA-COMP:16263"/>
        <dbReference type="ChEBI" id="CHEBI:15378"/>
        <dbReference type="ChEBI" id="CHEBI:57856"/>
        <dbReference type="ChEBI" id="CHEBI:59789"/>
        <dbReference type="ChEBI" id="CHEBI:90675"/>
        <dbReference type="ChEBI" id="CHEBI:90676"/>
    </reaction>
    <physiologicalReaction direction="left-to-right" evidence="2">
        <dbReference type="Rhea" id="RHEA:63089"/>
    </physiologicalReaction>
</comment>
<comment type="subunit">
    <text evidence="2">Component of box C/D small nucleolar ribonucleoprotein (snoRNP) particles. Part of the small subunit (SSU) processome, composed of more than 70 proteins and the RNA chaperone small nucleolar RNA (snoRNA) U3 (By similarity).</text>
</comment>
<comment type="subcellular location">
    <subcellularLocation>
        <location evidence="2">Nucleus</location>
        <location evidence="2">Nucleolus</location>
    </subcellularLocation>
    <subcellularLocation>
        <location evidence="4">Nucleus</location>
        <location evidence="4">Nucleoplasm</location>
    </subcellularLocation>
    <text evidence="2">Fibrillar region of the nucleolus.</text>
</comment>
<comment type="PTM">
    <text evidence="3">By homology to other fibrillarins, some or all of the N-terminal domain arginines are modified to asymmetric dimethylarginine (DMA).</text>
</comment>
<comment type="similarity">
    <text evidence="8">Belongs to the methyltransferase superfamily. Fibrillarin family.</text>
</comment>
<proteinExistence type="evidence at transcript level"/>
<reference key="1">
    <citation type="journal article" date="1990" name="Mol. Cell. Biol.">
        <title>Molecular cloning of Xenopus fibrillarin, a conserved U3 small nuclear ribonucleoprotein recognized by antisera from humans with autoimmune disease.</title>
        <authorList>
            <person name="Lapeyre B."/>
            <person name="Mariottini P."/>
            <person name="Mathieu C."/>
            <person name="Ferrer P."/>
            <person name="Amaldi F."/>
            <person name="Amalric F."/>
            <person name="Caizergues-Ferrer M."/>
        </authorList>
    </citation>
    <scope>NUCLEOTIDE SEQUENCE [MRNA]</scope>
</reference>
<protein>
    <recommendedName>
        <fullName>rRNA 2'-O-methyltransferase fibrillarin</fullName>
        <ecNumber evidence="2">2.1.1.-</ecNumber>
    </recommendedName>
    <alternativeName>
        <fullName>Histone-glutamine methyltransferase</fullName>
    </alternativeName>
    <alternativeName>
        <fullName evidence="8">U6 snRNA 2'-O-methyltransferase fibrillarin</fullName>
    </alternativeName>
</protein>
<gene>
    <name type="primary">fbl</name>
</gene>